<gene>
    <name evidence="5" type="primary">al-2</name>
    <name type="ORF">B22I21.230</name>
    <name type="ORF">NCU00585</name>
</gene>
<dbReference type="EC" id="5.5.1.19" evidence="2 3"/>
<dbReference type="EC" id="2.5.1.32" evidence="2 3"/>
<dbReference type="EMBL" id="L27652">
    <property type="protein sequence ID" value="AAA19428.1"/>
    <property type="molecule type" value="Genomic_DNA"/>
</dbReference>
<dbReference type="EMBL" id="BX842641">
    <property type="protein sequence ID" value="CAE76609.1"/>
    <property type="molecule type" value="Genomic_DNA"/>
</dbReference>
<dbReference type="EMBL" id="CM002236">
    <property type="protein sequence ID" value="EAA36489.3"/>
    <property type="molecule type" value="Genomic_DNA"/>
</dbReference>
<dbReference type="PIR" id="A53583">
    <property type="entry name" value="A53583"/>
</dbReference>
<dbReference type="RefSeq" id="XP_965725.3">
    <property type="nucleotide sequence ID" value="XM_960632.3"/>
</dbReference>
<dbReference type="SMR" id="P37295"/>
<dbReference type="STRING" id="367110.P37295"/>
<dbReference type="PaxDb" id="5141-EFNCRP00000000733"/>
<dbReference type="EnsemblFungi" id="EAA36489">
    <property type="protein sequence ID" value="EAA36489"/>
    <property type="gene ID" value="NCU00585"/>
</dbReference>
<dbReference type="GeneID" id="3881954"/>
<dbReference type="KEGG" id="ncr:NCU00585"/>
<dbReference type="VEuPathDB" id="FungiDB:NCU00585"/>
<dbReference type="HOGENOM" id="CLU_012965_0_0_1"/>
<dbReference type="InParanoid" id="P37295"/>
<dbReference type="OrthoDB" id="6600518at2759"/>
<dbReference type="BioCyc" id="MetaCyc:MONOMER-16129"/>
<dbReference type="UniPathway" id="UPA00799">
    <property type="reaction ID" value="UER00773"/>
</dbReference>
<dbReference type="UniPathway" id="UPA00802"/>
<dbReference type="Proteomes" id="UP000001805">
    <property type="component" value="Chromosome 1, Linkage Group I"/>
</dbReference>
<dbReference type="GO" id="GO:0016020">
    <property type="term" value="C:membrane"/>
    <property type="evidence" value="ECO:0007669"/>
    <property type="project" value="UniProtKB-SubCell"/>
</dbReference>
<dbReference type="GO" id="GO:0046905">
    <property type="term" value="F:15-cis-phytoene synthase activity"/>
    <property type="evidence" value="ECO:0000314"/>
    <property type="project" value="UniProtKB"/>
</dbReference>
<dbReference type="GO" id="GO:0004311">
    <property type="term" value="F:geranylgeranyl diphosphate synthase activity"/>
    <property type="evidence" value="ECO:0007669"/>
    <property type="project" value="InterPro"/>
</dbReference>
<dbReference type="GO" id="GO:0016872">
    <property type="term" value="F:intramolecular lyase activity"/>
    <property type="evidence" value="ECO:0007669"/>
    <property type="project" value="InterPro"/>
</dbReference>
<dbReference type="GO" id="GO:0045436">
    <property type="term" value="F:lycopene beta cyclase activity"/>
    <property type="evidence" value="ECO:0000314"/>
    <property type="project" value="UniProtKB"/>
</dbReference>
<dbReference type="GO" id="GO:0051996">
    <property type="term" value="F:squalene synthase [NAD(P)H] activity"/>
    <property type="evidence" value="ECO:0007669"/>
    <property type="project" value="InterPro"/>
</dbReference>
<dbReference type="GO" id="GO:0016120">
    <property type="term" value="P:carotene biosynthetic process"/>
    <property type="evidence" value="ECO:0000314"/>
    <property type="project" value="UniProtKB"/>
</dbReference>
<dbReference type="GO" id="GO:0016117">
    <property type="term" value="P:carotenoid biosynthetic process"/>
    <property type="evidence" value="ECO:0000314"/>
    <property type="project" value="UniProt"/>
</dbReference>
<dbReference type="CDD" id="cd00683">
    <property type="entry name" value="Trans_IPPS_HH"/>
    <property type="match status" value="1"/>
</dbReference>
<dbReference type="FunFam" id="1.10.600.10:FF:000018">
    <property type="entry name" value="Probable geranylgeranyl-diphosphate geranylgeranyltransferase (AL-2)"/>
    <property type="match status" value="1"/>
</dbReference>
<dbReference type="Gene3D" id="1.10.600.10">
    <property type="entry name" value="Farnesyl Diphosphate Synthase"/>
    <property type="match status" value="1"/>
</dbReference>
<dbReference type="InterPro" id="IPR008949">
    <property type="entry name" value="Isoprenoid_synthase_dom_sf"/>
</dbReference>
<dbReference type="InterPro" id="IPR017825">
    <property type="entry name" value="Lycopene_cyclase_dom"/>
</dbReference>
<dbReference type="InterPro" id="IPR002060">
    <property type="entry name" value="Squ/phyt_synthse"/>
</dbReference>
<dbReference type="InterPro" id="IPR019845">
    <property type="entry name" value="Squalene/phytoene_synthase_CS"/>
</dbReference>
<dbReference type="InterPro" id="IPR044843">
    <property type="entry name" value="Trans_IPPS_bact-type"/>
</dbReference>
<dbReference type="InterPro" id="IPR033904">
    <property type="entry name" value="Trans_IPPS_HH"/>
</dbReference>
<dbReference type="NCBIfam" id="TIGR03462">
    <property type="entry name" value="CarR_dom_SF"/>
    <property type="match status" value="2"/>
</dbReference>
<dbReference type="PANTHER" id="PTHR31480">
    <property type="entry name" value="BIFUNCTIONAL LYCOPENE CYCLASE/PHYTOENE SYNTHASE"/>
    <property type="match status" value="1"/>
</dbReference>
<dbReference type="Pfam" id="PF18916">
    <property type="entry name" value="Lycopene_cyc"/>
    <property type="match status" value="1"/>
</dbReference>
<dbReference type="Pfam" id="PF00494">
    <property type="entry name" value="SQS_PSY"/>
    <property type="match status" value="1"/>
</dbReference>
<dbReference type="SFLD" id="SFLDS00005">
    <property type="entry name" value="Isoprenoid_Synthase_Type_I"/>
    <property type="match status" value="1"/>
</dbReference>
<dbReference type="SFLD" id="SFLDG01212">
    <property type="entry name" value="Phytoene_synthase_like"/>
    <property type="match status" value="1"/>
</dbReference>
<dbReference type="SUPFAM" id="SSF48576">
    <property type="entry name" value="Terpenoid synthases"/>
    <property type="match status" value="1"/>
</dbReference>
<dbReference type="PROSITE" id="PS01044">
    <property type="entry name" value="SQUALEN_PHYTOEN_SYN_1"/>
    <property type="match status" value="1"/>
</dbReference>
<dbReference type="PROSITE" id="PS01045">
    <property type="entry name" value="SQUALEN_PHYTOEN_SYN_2"/>
    <property type="match status" value="1"/>
</dbReference>
<reference key="1">
    <citation type="journal article" date="1994" name="J. Biol. Chem.">
        <title>Characterization of al-2, the phytoene synthase gene of Neurospora crassa. Cloning, sequence analysis, and photoregulation.</title>
        <authorList>
            <person name="Schmidhauser T.J."/>
            <person name="Lauter F.-R."/>
            <person name="Schumacher M."/>
            <person name="Zhou W."/>
            <person name="Russo V.E.A."/>
            <person name="Yanofsky C."/>
        </authorList>
    </citation>
    <scope>NUCLEOTIDE SEQUENCE [GENOMIC DNA]</scope>
    <source>
        <strain>ATCC 24698 / 74-OR23-1A / CBS 708.71 / DSM 1257 / FGSC 987</strain>
    </source>
</reference>
<reference key="2">
    <citation type="journal article" date="2003" name="Nucleic Acids Res.">
        <title>What's in the genome of a filamentous fungus? Analysis of the Neurospora genome sequence.</title>
        <authorList>
            <person name="Mannhaupt G."/>
            <person name="Montrone C."/>
            <person name="Haase D."/>
            <person name="Mewes H.-W."/>
            <person name="Aign V."/>
            <person name="Hoheisel J.D."/>
            <person name="Fartmann B."/>
            <person name="Nyakatura G."/>
            <person name="Kempken F."/>
            <person name="Maier J."/>
            <person name="Schulte U."/>
        </authorList>
    </citation>
    <scope>NUCLEOTIDE SEQUENCE [LARGE SCALE GENOMIC DNA]</scope>
    <source>
        <strain>ATCC 24698 / 74-OR23-1A / CBS 708.71 / DSM 1257 / FGSC 987</strain>
    </source>
</reference>
<reference key="3">
    <citation type="journal article" date="2003" name="Nature">
        <title>The genome sequence of the filamentous fungus Neurospora crassa.</title>
        <authorList>
            <person name="Galagan J.E."/>
            <person name="Calvo S.E."/>
            <person name="Borkovich K.A."/>
            <person name="Selker E.U."/>
            <person name="Read N.D."/>
            <person name="Jaffe D.B."/>
            <person name="FitzHugh W."/>
            <person name="Ma L.-J."/>
            <person name="Smirnov S."/>
            <person name="Purcell S."/>
            <person name="Rehman B."/>
            <person name="Elkins T."/>
            <person name="Engels R."/>
            <person name="Wang S."/>
            <person name="Nielsen C.B."/>
            <person name="Butler J."/>
            <person name="Endrizzi M."/>
            <person name="Qui D."/>
            <person name="Ianakiev P."/>
            <person name="Bell-Pedersen D."/>
            <person name="Nelson M.A."/>
            <person name="Werner-Washburne M."/>
            <person name="Selitrennikoff C.P."/>
            <person name="Kinsey J.A."/>
            <person name="Braun E.L."/>
            <person name="Zelter A."/>
            <person name="Schulte U."/>
            <person name="Kothe G.O."/>
            <person name="Jedd G."/>
            <person name="Mewes H.-W."/>
            <person name="Staben C."/>
            <person name="Marcotte E."/>
            <person name="Greenberg D."/>
            <person name="Roy A."/>
            <person name="Foley K."/>
            <person name="Naylor J."/>
            <person name="Stange-Thomann N."/>
            <person name="Barrett R."/>
            <person name="Gnerre S."/>
            <person name="Kamal M."/>
            <person name="Kamvysselis M."/>
            <person name="Mauceli E.W."/>
            <person name="Bielke C."/>
            <person name="Rudd S."/>
            <person name="Frishman D."/>
            <person name="Krystofova S."/>
            <person name="Rasmussen C."/>
            <person name="Metzenberg R.L."/>
            <person name="Perkins D.D."/>
            <person name="Kroken S."/>
            <person name="Cogoni C."/>
            <person name="Macino G."/>
            <person name="Catcheside D.E.A."/>
            <person name="Li W."/>
            <person name="Pratt R.J."/>
            <person name="Osmani S.A."/>
            <person name="DeSouza C.P.C."/>
            <person name="Glass N.L."/>
            <person name="Orbach M.J."/>
            <person name="Berglund J.A."/>
            <person name="Voelker R."/>
            <person name="Yarden O."/>
            <person name="Plamann M."/>
            <person name="Seiler S."/>
            <person name="Dunlap J.C."/>
            <person name="Radford A."/>
            <person name="Aramayo R."/>
            <person name="Natvig D.O."/>
            <person name="Alex L.A."/>
            <person name="Mannhaupt G."/>
            <person name="Ebbole D.J."/>
            <person name="Freitag M."/>
            <person name="Paulsen I."/>
            <person name="Sachs M.S."/>
            <person name="Lander E.S."/>
            <person name="Nusbaum C."/>
            <person name="Birren B.W."/>
        </authorList>
    </citation>
    <scope>NUCLEOTIDE SEQUENCE [LARGE SCALE GENOMIC DNA]</scope>
    <source>
        <strain>ATCC 24698 / 74-OR23-1A / CBS 708.71 / DSM 1257 / FGSC 987</strain>
    </source>
</reference>
<reference key="4">
    <citation type="journal article" date="2002" name="Mol. Genet. Genomics">
        <title>Mutants of the carotene cyclase domain of al-2 from Neurospora crassa.</title>
        <authorList>
            <person name="Arrach N."/>
            <person name="Schmidhauser T.J."/>
            <person name="Avalos J."/>
        </authorList>
    </citation>
    <scope>FUNCTION</scope>
    <scope>CATALYTIC ACTIVITY</scope>
    <scope>MUTAGENESIS OF TRP-189 AND LYS-208</scope>
    <source>
        <strain>ATCC 24698 / 74-OR23-1A / CBS 708.71 / DSM 1257 / FGSC 987</strain>
    </source>
</reference>
<reference key="5">
    <citation type="journal article" date="2006" name="Biochim. Biophys. Acta">
        <title>The biotechnological potential of the al-2 gene from Neurospora crassa for the production of monocyclic keto hydroxy carotenoids.</title>
        <authorList>
            <person name="Sandmann G."/>
            <person name="Zhu C."/>
            <person name="Krubasik P."/>
            <person name="Fraser P.D."/>
        </authorList>
    </citation>
    <scope>FUNCTION</scope>
    <scope>CATALYTIC ACTIVITY</scope>
</reference>
<comment type="function">
    <text evidence="2 3 7">Bifunctional enzyme that catalyzes the reactions from geranylgeranyl diphosphate to phytoene (phytoene synthase) and from lycopene to beta-carotene via the intermediate gamma-carotene and from 3,4-didehydrolycopene to torulene (lycopene cyclase). Torulene is further processed to the acidic carotenoid neurosporaxanthin. The cyclase preferentially catalyzes single cyclizations at only one end of the substrate to produce monocyclic carotenoids (PubMed:11862485, PubMed:16928467). Neurosporaxanthin is synthesized from geranyl-geranyl pyrophosphate (GGPP) through several enzymatic activities. Phytoene synthase activity performed by the bifunctional enzyme al-2 first produces phytoene from geranyl-geranyl pyrophosphate (GGPP). The phytoene dehydrogenase al-1 then introduces 5 desaturations to lead to 3,4-didehydrolycopene via the intermediates phytofluene, zeta-carotene, neurosporene and lycopene. Al-2 cyclase activity then converts 3,4-didehydrolycopene into torulene. Al-2 can also convet lycopene into gamma-carotene which in turn is converted to beta-carotene by an additional al-2 cyclization reaction. Torulene is the substrate of the dioxidase cao-2 that breaks the molecule, removing five carbon atoms to yield beta-apo-4'-carotenal, whereas the aldehyde dehydrogenase ylo-1 mediates the last step by converting beta-apo-4'-carotenal into neurosporaxanthin (Probable).</text>
</comment>
<comment type="catalytic activity">
    <reaction evidence="2 3">
        <text>all-trans-lycopene = gamma-carotene</text>
        <dbReference type="Rhea" id="RHEA:32219"/>
        <dbReference type="ChEBI" id="CHEBI:15948"/>
        <dbReference type="ChEBI" id="CHEBI:27740"/>
        <dbReference type="EC" id="5.5.1.19"/>
    </reaction>
</comment>
<comment type="catalytic activity">
    <reaction evidence="2 3">
        <text>gamma-carotene = all-trans-beta-carotene</text>
        <dbReference type="Rhea" id="RHEA:32239"/>
        <dbReference type="ChEBI" id="CHEBI:17579"/>
        <dbReference type="ChEBI" id="CHEBI:27740"/>
        <dbReference type="EC" id="5.5.1.19"/>
    </reaction>
</comment>
<comment type="catalytic activity">
    <reaction evidence="2 3">
        <text>2 (2E,6E,10E)-geranylgeranyl diphosphate = 15-cis-phytoene + 2 diphosphate</text>
        <dbReference type="Rhea" id="RHEA:34475"/>
        <dbReference type="ChEBI" id="CHEBI:27787"/>
        <dbReference type="ChEBI" id="CHEBI:33019"/>
        <dbReference type="ChEBI" id="CHEBI:58756"/>
        <dbReference type="EC" id="2.5.1.32"/>
    </reaction>
</comment>
<comment type="pathway">
    <text evidence="2 3">Carotenoid biosynthesis; beta-carotene biosynthesis.</text>
</comment>
<comment type="pathway">
    <text evidence="2 3">Carotenoid biosynthesis; phytoene biosynthesis; all-trans-phytoene from geranylgeranyl diphosphate: step 1/1.</text>
</comment>
<comment type="subcellular location">
    <subcellularLocation>
        <location evidence="6">Membrane</location>
        <topology evidence="6">Multi-pass membrane protein</topology>
    </subcellularLocation>
</comment>
<comment type="induction">
    <text>By blue light.</text>
</comment>
<comment type="similarity">
    <text evidence="6">In the N-terminal section; belongs to the lycopene beta-cyclase family.</text>
</comment>
<comment type="similarity">
    <text evidence="6">In the C-terminal section; belongs to the phytoene/squalene synthase family.</text>
</comment>
<accession>P37295</accession>
<accession>Q7RVN3</accession>
<evidence type="ECO:0000255" key="1"/>
<evidence type="ECO:0000269" key="2">
    <source>
    </source>
</evidence>
<evidence type="ECO:0000269" key="3">
    <source>
    </source>
</evidence>
<evidence type="ECO:0000303" key="4">
    <source>
    </source>
</evidence>
<evidence type="ECO:0000303" key="5">
    <source>
    </source>
</evidence>
<evidence type="ECO:0000305" key="6"/>
<evidence type="ECO:0000305" key="7">
    <source>
    </source>
</evidence>
<evidence type="ECO:0000305" key="8">
    <source>
    </source>
</evidence>
<keyword id="KW-0125">Carotenoid biosynthesis</keyword>
<keyword id="KW-0413">Isomerase</keyword>
<keyword id="KW-0472">Membrane</keyword>
<keyword id="KW-0511">Multifunctional enzyme</keyword>
<keyword id="KW-1185">Reference proteome</keyword>
<keyword id="KW-0808">Transferase</keyword>
<keyword id="KW-0812">Transmembrane</keyword>
<keyword id="KW-1133">Transmembrane helix</keyword>
<sequence>MYDYAFVHLKFTVPAAVLLTAIAYPILNRIHLIQTGFLVVVAFTAALPWDAYLIKHKVWSYPPEAIVGPRLLGIPFEELFFFVIQTYITALVYILFNKPVLHALHLNNQQNPPAWMRVVKVTGQVVLVALSVWGWNAAQVHQETSYLGLILVWACPFLLAIWTLAGRFILSLPWYATVLPMFLPTFYLWAVDEFALHRGTWSIGSGTKLDFCLFGKLDIEEATFFLVTNMLIVGGMAAFDQYLAVIYAFPTLFPKVNRYPTTHMLLQSRLINTSRYDLERIEGLREAVERLRLKSRSFYLANSLFSGRLRIDLILLYSFCRLADDLVDDAKSRREVLSWTAKLNHFLDLHYKDADATEDPKKKAERIDAYIKTAFPPCAYQALHLLPTHILPPKPLYDLIKGFEMDSQFTFHGTSDSTDLQYPIADDKDLENYAIYVAGTVGELCIALIIYHCLPDMSDTQKRELETAACRMGIALQYVNIARDIVVDARIGRVYLPTTWLKKEGLTHKMVLENPEGPEVIERMRRRLLENAFELYGGARPEMQRIPSEARGPMIGAVENYMAIGRVLRERKEGTVFVRMEGRATVPKRRRLSTLLRALYEQ</sequence>
<feature type="chain" id="PRO_0000067440" description="Bifunctional lycopene cyclase/phytoene synthase">
    <location>
        <begin position="1"/>
        <end position="602"/>
    </location>
</feature>
<feature type="transmembrane region" description="Helical" evidence="1">
    <location>
        <begin position="6"/>
        <end position="26"/>
    </location>
</feature>
<feature type="transmembrane region" description="Helical" evidence="1">
    <location>
        <begin position="30"/>
        <end position="50"/>
    </location>
</feature>
<feature type="transmembrane region" description="Helical" evidence="1">
    <location>
        <begin position="76"/>
        <end position="96"/>
    </location>
</feature>
<feature type="transmembrane region" description="Helical" evidence="1">
    <location>
        <begin position="118"/>
        <end position="138"/>
    </location>
</feature>
<feature type="transmembrane region" description="Helical" evidence="1">
    <location>
        <begin position="146"/>
        <end position="166"/>
    </location>
</feature>
<feature type="transmembrane region" description="Helical" evidence="1">
    <location>
        <begin position="168"/>
        <end position="188"/>
    </location>
</feature>
<feature type="transmembrane region" description="Helical" evidence="1">
    <location>
        <begin position="230"/>
        <end position="250"/>
    </location>
</feature>
<feature type="region of interest" description="Lycopene beta-cyclase" evidence="8">
    <location>
        <begin position="1"/>
        <end position="241"/>
    </location>
</feature>
<feature type="region of interest" description="Phytoene synthase" evidence="8">
    <location>
        <begin position="248"/>
        <end position="602"/>
    </location>
</feature>
<feature type="mutagenesis site" description="In JA26; Abolishes lycopene cyclase activity and accumulates a polar precursor carotenoid of neurosporaxanthin." evidence="2">
    <original>W</original>
    <variation>R</variation>
    <location>
        <position position="189"/>
    </location>
</feature>
<feature type="mutagenesis site" description="In JA28; Abolishes lycopene cyclase activity and accumulates a polar precursor carotenoid of neurosporaxanthin." evidence="2">
    <original>K</original>
    <variation>E</variation>
    <location>
        <position position="208"/>
    </location>
</feature>
<protein>
    <recommendedName>
        <fullName evidence="4">Bifunctional lycopene cyclase/phytoene synthase</fullName>
    </recommendedName>
    <alternativeName>
        <fullName>Protein albino-2</fullName>
    </alternativeName>
    <domain>
        <recommendedName>
            <fullName evidence="4">Lycopene beta-cyclase</fullName>
            <ecNumber evidence="2 3">5.5.1.19</ecNumber>
        </recommendedName>
        <alternativeName>
            <fullName evidence="4">Carotene cyclase</fullName>
        </alternativeName>
        <alternativeName>
            <fullName evidence="4">Lycopene cyclase</fullName>
        </alternativeName>
    </domain>
    <domain>
        <recommendedName>
            <fullName evidence="5">Phytoene synthase</fullName>
            <ecNumber evidence="2 3">2.5.1.32</ecNumber>
        </recommendedName>
    </domain>
</protein>
<name>LCPS_NEUCR</name>
<organism>
    <name type="scientific">Neurospora crassa (strain ATCC 24698 / 74-OR23-1A / CBS 708.71 / DSM 1257 / FGSC 987)</name>
    <dbReference type="NCBI Taxonomy" id="367110"/>
    <lineage>
        <taxon>Eukaryota</taxon>
        <taxon>Fungi</taxon>
        <taxon>Dikarya</taxon>
        <taxon>Ascomycota</taxon>
        <taxon>Pezizomycotina</taxon>
        <taxon>Sordariomycetes</taxon>
        <taxon>Sordariomycetidae</taxon>
        <taxon>Sordariales</taxon>
        <taxon>Sordariaceae</taxon>
        <taxon>Neurospora</taxon>
    </lineage>
</organism>
<proteinExistence type="evidence at protein level"/>